<dbReference type="EC" id="6.2.1.26" evidence="1"/>
<dbReference type="EMBL" id="AP009324">
    <property type="protein sequence ID" value="BAF78665.1"/>
    <property type="molecule type" value="Genomic_DNA"/>
</dbReference>
<dbReference type="RefSeq" id="WP_000348364.1">
    <property type="nucleotide sequence ID" value="NC_009782.1"/>
</dbReference>
<dbReference type="SMR" id="A7X3P0"/>
<dbReference type="KEGG" id="saw:SAHV_1782"/>
<dbReference type="HOGENOM" id="CLU_000022_59_0_9"/>
<dbReference type="UniPathway" id="UPA00079"/>
<dbReference type="UniPathway" id="UPA01057">
    <property type="reaction ID" value="UER00166"/>
</dbReference>
<dbReference type="GO" id="GO:0005524">
    <property type="term" value="F:ATP binding"/>
    <property type="evidence" value="ECO:0007669"/>
    <property type="project" value="UniProtKB-KW"/>
</dbReference>
<dbReference type="GO" id="GO:0008756">
    <property type="term" value="F:o-succinylbenzoate-CoA ligase activity"/>
    <property type="evidence" value="ECO:0007669"/>
    <property type="project" value="UniProtKB-UniRule"/>
</dbReference>
<dbReference type="GO" id="GO:0009234">
    <property type="term" value="P:menaquinone biosynthetic process"/>
    <property type="evidence" value="ECO:0007669"/>
    <property type="project" value="UniProtKB-UniRule"/>
</dbReference>
<dbReference type="CDD" id="cd05912">
    <property type="entry name" value="OSB_CoA_lg"/>
    <property type="match status" value="1"/>
</dbReference>
<dbReference type="Gene3D" id="3.30.300.30">
    <property type="match status" value="1"/>
</dbReference>
<dbReference type="Gene3D" id="3.40.50.12780">
    <property type="entry name" value="N-terminal domain of ligase-like"/>
    <property type="match status" value="1"/>
</dbReference>
<dbReference type="HAMAP" id="MF_00731">
    <property type="entry name" value="MenE"/>
    <property type="match status" value="1"/>
</dbReference>
<dbReference type="InterPro" id="IPR025110">
    <property type="entry name" value="AMP-bd_C"/>
</dbReference>
<dbReference type="InterPro" id="IPR045851">
    <property type="entry name" value="AMP-bd_C_sf"/>
</dbReference>
<dbReference type="InterPro" id="IPR000873">
    <property type="entry name" value="AMP-dep_synth/lig_dom"/>
</dbReference>
<dbReference type="InterPro" id="IPR042099">
    <property type="entry name" value="ANL_N_sf"/>
</dbReference>
<dbReference type="InterPro" id="IPR050237">
    <property type="entry name" value="ATP-dep_AMP-bd_enzyme"/>
</dbReference>
<dbReference type="InterPro" id="IPR010192">
    <property type="entry name" value="MenE"/>
</dbReference>
<dbReference type="NCBIfam" id="TIGR01923">
    <property type="entry name" value="menE"/>
    <property type="match status" value="1"/>
</dbReference>
<dbReference type="PANTHER" id="PTHR43767">
    <property type="entry name" value="LONG-CHAIN-FATTY-ACID--COA LIGASE"/>
    <property type="match status" value="1"/>
</dbReference>
<dbReference type="PANTHER" id="PTHR43767:SF1">
    <property type="entry name" value="NONRIBOSOMAL PEPTIDE SYNTHASE PES1 (EUROFUNG)-RELATED"/>
    <property type="match status" value="1"/>
</dbReference>
<dbReference type="Pfam" id="PF00501">
    <property type="entry name" value="AMP-binding"/>
    <property type="match status" value="1"/>
</dbReference>
<dbReference type="Pfam" id="PF13193">
    <property type="entry name" value="AMP-binding_C"/>
    <property type="match status" value="1"/>
</dbReference>
<dbReference type="SUPFAM" id="SSF56801">
    <property type="entry name" value="Acetyl-CoA synthetase-like"/>
    <property type="match status" value="1"/>
</dbReference>
<organism>
    <name type="scientific">Staphylococcus aureus (strain Mu3 / ATCC 700698)</name>
    <dbReference type="NCBI Taxonomy" id="418127"/>
    <lineage>
        <taxon>Bacteria</taxon>
        <taxon>Bacillati</taxon>
        <taxon>Bacillota</taxon>
        <taxon>Bacilli</taxon>
        <taxon>Bacillales</taxon>
        <taxon>Staphylococcaceae</taxon>
        <taxon>Staphylococcus</taxon>
    </lineage>
</organism>
<feature type="chain" id="PRO_1000045965" description="2-succinylbenzoate--CoA ligase">
    <location>
        <begin position="1"/>
        <end position="492"/>
    </location>
</feature>
<protein>
    <recommendedName>
        <fullName evidence="1">2-succinylbenzoate--CoA ligase</fullName>
        <ecNumber evidence="1">6.2.1.26</ecNumber>
    </recommendedName>
    <alternativeName>
        <fullName evidence="1">o-succinylbenzoyl-CoA synthetase</fullName>
        <shortName evidence="1">OSB-CoA synthetase</shortName>
    </alternativeName>
</protein>
<sequence length="492" mass="55357">MDFWLYKQAQQNGHHIAITDGQESYTYQNLYCEASLLAKRLKAYQQSRVGLYIDNSIQSIILIHACWLANIEIAMINTRLTPNEMTNQMRSIDVQLIFCTLPLELRGFQIVSLDDIEFAGRDITTNGLLDNTMGIQYDTSNETVVPKESPSNILNTSFNLDDIASIMFTSGTTGPQKAVPQTFRNHYASAIGCKESLGFDRDTNWLSVLPIYHISGLSVLLRAVIEGFTVRIVDKFNAEQILTMIKNERITHISLVPQTLNWLMQQGLHEPYNLQKILLGGAKLSATMIETALQYNLPIYNSFGMTETCSQFLTATPEMLHARPDTVGMPSANVDVKIKNPNKEGHGELMIKGANVMNGYLYPTDLTGTFENGYFNTGDIAEIDHEGYVMIYDRRKDLIISGGENIYPYQIETVAKQFPGISDAVCVGHPDDTWGQVPKLYFVSESDISKAQLIAYLSKHLAKYKVPKHFEKVDTLPYTSTGKLQRNKLYRG</sequence>
<comment type="function">
    <text evidence="1">Converts 2-succinylbenzoate (OSB) to 2-succinylbenzoyl-CoA (OSB-CoA).</text>
</comment>
<comment type="catalytic activity">
    <reaction evidence="1">
        <text>2-succinylbenzoate + ATP + CoA = 2-succinylbenzoyl-CoA + AMP + diphosphate</text>
        <dbReference type="Rhea" id="RHEA:17009"/>
        <dbReference type="ChEBI" id="CHEBI:18325"/>
        <dbReference type="ChEBI" id="CHEBI:30616"/>
        <dbReference type="ChEBI" id="CHEBI:33019"/>
        <dbReference type="ChEBI" id="CHEBI:57287"/>
        <dbReference type="ChEBI" id="CHEBI:57364"/>
        <dbReference type="ChEBI" id="CHEBI:456215"/>
        <dbReference type="EC" id="6.2.1.26"/>
    </reaction>
</comment>
<comment type="pathway">
    <text evidence="1">Quinol/quinone metabolism; 1,4-dihydroxy-2-naphthoate biosynthesis; 1,4-dihydroxy-2-naphthoate from chorismate: step 5/7.</text>
</comment>
<comment type="pathway">
    <text evidence="1">Quinol/quinone metabolism; menaquinone biosynthesis.</text>
</comment>
<comment type="similarity">
    <text evidence="1">Belongs to the ATP-dependent AMP-binding enzyme family. MenE subfamily.</text>
</comment>
<keyword id="KW-0067">ATP-binding</keyword>
<keyword id="KW-0436">Ligase</keyword>
<keyword id="KW-0474">Menaquinone biosynthesis</keyword>
<keyword id="KW-0547">Nucleotide-binding</keyword>
<proteinExistence type="inferred from homology"/>
<gene>
    <name evidence="1" type="primary">menE</name>
    <name type="ordered locus">SAHV_1782</name>
</gene>
<name>MENE_STAA1</name>
<accession>A7X3P0</accession>
<evidence type="ECO:0000255" key="1">
    <source>
        <dbReference type="HAMAP-Rule" id="MF_00731"/>
    </source>
</evidence>
<reference key="1">
    <citation type="journal article" date="2008" name="Antimicrob. Agents Chemother.">
        <title>Mutated response regulator graR is responsible for phenotypic conversion of Staphylococcus aureus from heterogeneous vancomycin-intermediate resistance to vancomycin-intermediate resistance.</title>
        <authorList>
            <person name="Neoh H.-M."/>
            <person name="Cui L."/>
            <person name="Yuzawa H."/>
            <person name="Takeuchi F."/>
            <person name="Matsuo M."/>
            <person name="Hiramatsu K."/>
        </authorList>
    </citation>
    <scope>NUCLEOTIDE SEQUENCE [LARGE SCALE GENOMIC DNA]</scope>
    <source>
        <strain>Mu3 / ATCC 700698</strain>
    </source>
</reference>